<reference key="1">
    <citation type="journal article" date="1993" name="Dev. Biol.">
        <title>Expression of wnt10a in the central nervous system of developing zebrafish.</title>
        <authorList>
            <person name="Kelly G.M."/>
            <person name="Lai C.-J."/>
            <person name="Moon R.T."/>
        </authorList>
    </citation>
    <scope>NUCLEOTIDE SEQUENCE [MRNA]</scope>
    <scope>DEVELOPMENTAL STAGE</scope>
</reference>
<reference key="2">
    <citation type="journal article" date="2017" name="Mol. Genet. Genomic Med.">
        <title>Role of WNT10A in failure of tooth development in humans and zebrafish.</title>
        <authorList>
            <person name="Yuan Q."/>
            <person name="Zhao M."/>
            <person name="Tandon B."/>
            <person name="Maili L."/>
            <person name="Liu X."/>
            <person name="Zhang A."/>
            <person name="Baugh E.H."/>
            <person name="Tran T."/>
            <person name="Silva R.M."/>
            <person name="Hecht J.T."/>
            <person name="Swindell E.C."/>
            <person name="Wagner D.S."/>
            <person name="Letra A."/>
        </authorList>
    </citation>
    <scope>FUNCTION</scope>
    <scope>DEVELOPMENTAL STAGE</scope>
    <scope>DISRUPTION PHENOTYPE</scope>
    <scope>MUTAGENESIS OF GLY-248 AND THR-382</scope>
</reference>
<evidence type="ECO:0000250" key="1">
    <source>
        <dbReference type="UniProtKB" id="P27467"/>
    </source>
</evidence>
<evidence type="ECO:0000250" key="2">
    <source>
        <dbReference type="UniProtKB" id="P28026"/>
    </source>
</evidence>
<evidence type="ECO:0000250" key="3">
    <source>
        <dbReference type="UniProtKB" id="P56704"/>
    </source>
</evidence>
<evidence type="ECO:0000250" key="4">
    <source>
        <dbReference type="UniProtKB" id="Q9GZT5"/>
    </source>
</evidence>
<evidence type="ECO:0000255" key="5"/>
<evidence type="ECO:0000269" key="6">
    <source>
    </source>
</evidence>
<evidence type="ECO:0000269" key="7">
    <source>
    </source>
</evidence>
<evidence type="ECO:0000305" key="8"/>
<organism>
    <name type="scientific">Danio rerio</name>
    <name type="common">Zebrafish</name>
    <name type="synonym">Brachydanio rerio</name>
    <dbReference type="NCBI Taxonomy" id="7955"/>
    <lineage>
        <taxon>Eukaryota</taxon>
        <taxon>Metazoa</taxon>
        <taxon>Chordata</taxon>
        <taxon>Craniata</taxon>
        <taxon>Vertebrata</taxon>
        <taxon>Euteleostomi</taxon>
        <taxon>Actinopterygii</taxon>
        <taxon>Neopterygii</taxon>
        <taxon>Teleostei</taxon>
        <taxon>Ostariophysi</taxon>
        <taxon>Cypriniformes</taxon>
        <taxon>Danionidae</taxon>
        <taxon>Danioninae</taxon>
        <taxon>Danio</taxon>
    </lineage>
</organism>
<feature type="signal peptide" evidence="5">
    <location>
        <begin position="1"/>
        <end status="unknown"/>
    </location>
</feature>
<feature type="chain" id="PRO_0000041462" description="Protein Wnt-10a">
    <location>
        <begin status="unknown"/>
        <end position="442"/>
    </location>
</feature>
<feature type="lipid moiety-binding region" description="O-palmitoleoyl serine; by PORCN" evidence="3">
    <location>
        <position position="303"/>
    </location>
</feature>
<feature type="glycosylation site" description="N-linked (GlcNAc...) asparagine" evidence="5">
    <location>
        <position position="143"/>
    </location>
</feature>
<feature type="glycosylation site" description="N-linked (GlcNAc...) asparagine" evidence="5">
    <location>
        <position position="388"/>
    </location>
</feature>
<feature type="disulfide bond" evidence="2">
    <location>
        <begin position="133"/>
        <end position="144"/>
    </location>
</feature>
<feature type="disulfide bond" evidence="2">
    <location>
        <begin position="186"/>
        <end position="194"/>
    </location>
</feature>
<feature type="disulfide bond" evidence="2">
    <location>
        <begin position="196"/>
        <end position="249"/>
    </location>
</feature>
<feature type="disulfide bond" evidence="2">
    <location>
        <begin position="297"/>
        <end position="311"/>
    </location>
</feature>
<feature type="disulfide bond" evidence="2">
    <location>
        <begin position="299"/>
        <end position="306"/>
    </location>
</feature>
<feature type="disulfide bond" evidence="2">
    <location>
        <begin position="371"/>
        <end position="402"/>
    </location>
</feature>
<feature type="disulfide bond" evidence="2">
    <location>
        <begin position="387"/>
        <end position="397"/>
    </location>
</feature>
<feature type="disulfide bond" evidence="2">
    <location>
        <begin position="401"/>
        <end position="441"/>
    </location>
</feature>
<feature type="disulfide bond" evidence="2">
    <location>
        <begin position="417"/>
        <end position="432"/>
    </location>
</feature>
<feature type="disulfide bond" evidence="2">
    <location>
        <begin position="419"/>
        <end position="429"/>
    </location>
</feature>
<feature type="disulfide bond" evidence="2">
    <location>
        <begin position="424"/>
        <end position="425"/>
    </location>
</feature>
<feature type="mutagenesis site" description="Strongly decreases the ability to induce the expression of genes involved in tooth development." evidence="6">
    <original>G</original>
    <variation>S</variation>
    <location>
        <position position="248"/>
    </location>
</feature>
<feature type="mutagenesis site" description="No significant effect on the ability to induce the expression of genes involved in tooth development." evidence="6">
    <original>T</original>
    <variation>I</variation>
    <location>
        <position position="382"/>
    </location>
</feature>
<keyword id="KW-0217">Developmental protein</keyword>
<keyword id="KW-1015">Disulfide bond</keyword>
<keyword id="KW-0272">Extracellular matrix</keyword>
<keyword id="KW-0325">Glycoprotein</keyword>
<keyword id="KW-0449">Lipoprotein</keyword>
<keyword id="KW-1185">Reference proteome</keyword>
<keyword id="KW-0964">Secreted</keyword>
<keyword id="KW-0732">Signal</keyword>
<keyword id="KW-0879">Wnt signaling pathway</keyword>
<sequence length="442" mass="50047">MSSHDISWHSPASVYFSSDLDVKRIAGKLRGCWTDLLLRQESCCERVLQKSSSSMDYFLFRLFCSLALASLLVQRADSNEILGLKIPFDPILNANTVCLTLPGLTKKQLDVCMRNPDVTASAIQGIQIAIHECQHQFRGHRWNCSSLETRNKIPYESVVFSRGFRESAFAYAIAAAGVVHAVSNACAMGKLKACGCDEKRRGDEEALRIKLNRLQLEAINRGKGMVHGVMEHFPAEALGPQDSWEWGGCSPNVEYGERFSKDFLDSRETYRDIHSRMRLHNNRVGRQVVVDHMRRKCKCHGTSGSCQLKTCWQVTPEFRTVGSLLKERLNVATLIKAHNRNTGQVENAHHTHRRRANINDLVYFEKSPDFCERDLGSDSAGTQGRICNKTSQGMDNCESLCCGRGHNILQQTRSERCNCKFHWCCYVVCEECRITEWVSVCK</sequence>
<protein>
    <recommendedName>
        <fullName>Protein Wnt-10a</fullName>
    </recommendedName>
</protein>
<dbReference type="EMBL" id="U02544">
    <property type="protein sequence ID" value="AAA03431.1"/>
    <property type="molecule type" value="mRNA"/>
</dbReference>
<dbReference type="PIR" id="I50110">
    <property type="entry name" value="I50110"/>
</dbReference>
<dbReference type="SMR" id="P43446"/>
<dbReference type="FunCoup" id="P43446">
    <property type="interactions" value="984"/>
</dbReference>
<dbReference type="STRING" id="7955.ENSDARP00000005680"/>
<dbReference type="GlyCosmos" id="P43446">
    <property type="glycosylation" value="2 sites, No reported glycans"/>
</dbReference>
<dbReference type="PaxDb" id="7955-ENSDARP00000005680"/>
<dbReference type="AGR" id="ZFIN:ZDB-GENE-990415-278"/>
<dbReference type="ZFIN" id="ZDB-GENE-990415-278">
    <property type="gene designation" value="wnt10a"/>
</dbReference>
<dbReference type="eggNOG" id="KOG3913">
    <property type="taxonomic scope" value="Eukaryota"/>
</dbReference>
<dbReference type="InParanoid" id="P43446"/>
<dbReference type="PhylomeDB" id="P43446"/>
<dbReference type="Reactome" id="R-DRE-3238698">
    <property type="pathway name" value="WNT ligand biogenesis and trafficking"/>
</dbReference>
<dbReference type="PRO" id="PR:P43446"/>
<dbReference type="Proteomes" id="UP000000437">
    <property type="component" value="Unplaced"/>
</dbReference>
<dbReference type="GO" id="GO:0005615">
    <property type="term" value="C:extracellular space"/>
    <property type="evidence" value="ECO:0000318"/>
    <property type="project" value="GO_Central"/>
</dbReference>
<dbReference type="GO" id="GO:0005125">
    <property type="term" value="F:cytokine activity"/>
    <property type="evidence" value="ECO:0000318"/>
    <property type="project" value="GO_Central"/>
</dbReference>
<dbReference type="GO" id="GO:0005109">
    <property type="term" value="F:frizzled binding"/>
    <property type="evidence" value="ECO:0000318"/>
    <property type="project" value="GO_Central"/>
</dbReference>
<dbReference type="GO" id="GO:0060070">
    <property type="term" value="P:canonical Wnt signaling pathway"/>
    <property type="evidence" value="ECO:0000318"/>
    <property type="project" value="GO_Central"/>
</dbReference>
<dbReference type="GO" id="GO:0045165">
    <property type="term" value="P:cell fate commitment"/>
    <property type="evidence" value="ECO:0000318"/>
    <property type="project" value="GO_Central"/>
</dbReference>
<dbReference type="GO" id="GO:0030182">
    <property type="term" value="P:neuron differentiation"/>
    <property type="evidence" value="ECO:0000318"/>
    <property type="project" value="GO_Central"/>
</dbReference>
<dbReference type="GO" id="GO:0042476">
    <property type="term" value="P:odontogenesis"/>
    <property type="evidence" value="ECO:0000315"/>
    <property type="project" value="ZFIN"/>
</dbReference>
<dbReference type="CDD" id="cd19355">
    <property type="entry name" value="Wnt_Wnt10a"/>
    <property type="match status" value="1"/>
</dbReference>
<dbReference type="FunFam" id="3.30.2460.20:FF:000001">
    <property type="entry name" value="Wnt homolog"/>
    <property type="match status" value="1"/>
</dbReference>
<dbReference type="Gene3D" id="3.30.2460.20">
    <property type="match status" value="1"/>
</dbReference>
<dbReference type="InterPro" id="IPR005817">
    <property type="entry name" value="Wnt"/>
</dbReference>
<dbReference type="InterPro" id="IPR013302">
    <property type="entry name" value="Wnt10"/>
</dbReference>
<dbReference type="InterPro" id="IPR043158">
    <property type="entry name" value="Wnt_C"/>
</dbReference>
<dbReference type="InterPro" id="IPR018161">
    <property type="entry name" value="Wnt_CS"/>
</dbReference>
<dbReference type="PANTHER" id="PTHR12027:SF89">
    <property type="entry name" value="PROTEIN WNT-10A"/>
    <property type="match status" value="1"/>
</dbReference>
<dbReference type="PANTHER" id="PTHR12027">
    <property type="entry name" value="WNT RELATED"/>
    <property type="match status" value="1"/>
</dbReference>
<dbReference type="Pfam" id="PF00110">
    <property type="entry name" value="wnt"/>
    <property type="match status" value="1"/>
</dbReference>
<dbReference type="PRINTS" id="PR01893">
    <property type="entry name" value="WNT10PROTEIN"/>
</dbReference>
<dbReference type="PRINTS" id="PR01349">
    <property type="entry name" value="WNTPROTEIN"/>
</dbReference>
<dbReference type="SMART" id="SM00097">
    <property type="entry name" value="WNT1"/>
    <property type="match status" value="1"/>
</dbReference>
<dbReference type="PROSITE" id="PS00246">
    <property type="entry name" value="WNT1"/>
    <property type="match status" value="1"/>
</dbReference>
<accession>P43446</accession>
<proteinExistence type="evidence at protein level"/>
<gene>
    <name type="primary">wnt10a</name>
    <name type="synonym">wnt-10a</name>
</gene>
<name>WN10A_DANRE</name>
<comment type="function">
    <text evidence="6 8">Ligand for members of the frizzled family of seven transmembrane receptors (Probable). Required for normal tooth development (PubMed:29178643). Regulates the expression of genes involved in tooth development (PubMed:29178643).</text>
</comment>
<comment type="subcellular location">
    <subcellularLocation>
        <location evidence="4">Secreted</location>
        <location evidence="4">Extracellular space</location>
        <location evidence="4">Extracellular matrix</location>
    </subcellularLocation>
    <subcellularLocation>
        <location evidence="4">Secreted</location>
    </subcellularLocation>
</comment>
<comment type="developmental stage">
    <text evidence="6 7">Detected in embryos (at protein level) (PubMed:29178643). First detected during the segmentation period of embryogenesis (PubMed:8330668). Detected in the developing brain and spinal cord (PubMed:8330668). Detected at constant levels in embryonic head throughout embryonic development, from 18 hpf to 5 dpf (PubMed:29178643). Widely expressed in embryos at 56 hpf (PubMed:29178643).</text>
</comment>
<comment type="PTM">
    <text evidence="1 3">Palmitoleoylation is required for efficient binding to frizzled receptors. Depalmitoleoylation leads to Wnt signaling pathway inhibition.</text>
</comment>
<comment type="disruption phenotype">
    <text evidence="6">Morpholino knockdown of the protein causes arrest of tooth development. Otherwise, mutant embryos appear grossly normal, excepting some cartilage abnormalities.</text>
</comment>
<comment type="miscellaneous">
    <text evidence="6">Wnt10a overexpression in embryos results in loss of anterior neural identity, causing a phenotype with small or no eyes.</text>
</comment>
<comment type="similarity">
    <text evidence="8">Belongs to the Wnt family.</text>
</comment>